<reference key="1">
    <citation type="journal article" date="2004" name="Proc. Natl. Acad. Sci. U.S.A.">
        <title>Insights into the evolution of Yersinia pestis through whole-genome comparison with Yersinia pseudotuberculosis.</title>
        <authorList>
            <person name="Chain P.S.G."/>
            <person name="Carniel E."/>
            <person name="Larimer F.W."/>
            <person name="Lamerdin J."/>
            <person name="Stoutland P.O."/>
            <person name="Regala W.M."/>
            <person name="Georgescu A.M."/>
            <person name="Vergez L.M."/>
            <person name="Land M.L."/>
            <person name="Motin V.L."/>
            <person name="Brubaker R.R."/>
            <person name="Fowler J."/>
            <person name="Hinnebusch J."/>
            <person name="Marceau M."/>
            <person name="Medigue C."/>
            <person name="Simonet M."/>
            <person name="Chenal-Francisque V."/>
            <person name="Souza B."/>
            <person name="Dacheux D."/>
            <person name="Elliott J.M."/>
            <person name="Derbise A."/>
            <person name="Hauser L.J."/>
            <person name="Garcia E."/>
        </authorList>
    </citation>
    <scope>NUCLEOTIDE SEQUENCE [LARGE SCALE GENOMIC DNA]</scope>
    <source>
        <strain>IP32953</strain>
    </source>
</reference>
<dbReference type="EC" id="1.6.1.1" evidence="1"/>
<dbReference type="EMBL" id="BX936398">
    <property type="protein sequence ID" value="CAH19361.1"/>
    <property type="molecule type" value="Genomic_DNA"/>
</dbReference>
<dbReference type="RefSeq" id="WP_002209477.1">
    <property type="nucleotide sequence ID" value="NZ_CP009712.1"/>
</dbReference>
<dbReference type="SMR" id="Q66G61"/>
<dbReference type="GeneID" id="96663600"/>
<dbReference type="KEGG" id="ypo:BZ17_2476"/>
<dbReference type="KEGG" id="yps:YPTB0121"/>
<dbReference type="PATRIC" id="fig|273123.14.peg.2594"/>
<dbReference type="Proteomes" id="UP000001011">
    <property type="component" value="Chromosome"/>
</dbReference>
<dbReference type="GO" id="GO:0005829">
    <property type="term" value="C:cytosol"/>
    <property type="evidence" value="ECO:0007669"/>
    <property type="project" value="TreeGrafter"/>
</dbReference>
<dbReference type="GO" id="GO:0004148">
    <property type="term" value="F:dihydrolipoyl dehydrogenase (NADH) activity"/>
    <property type="evidence" value="ECO:0007669"/>
    <property type="project" value="TreeGrafter"/>
</dbReference>
<dbReference type="GO" id="GO:0050660">
    <property type="term" value="F:flavin adenine dinucleotide binding"/>
    <property type="evidence" value="ECO:0007669"/>
    <property type="project" value="TreeGrafter"/>
</dbReference>
<dbReference type="GO" id="GO:0003957">
    <property type="term" value="F:NAD(P)+ transhydrogenase (Si-specific) activity"/>
    <property type="evidence" value="ECO:0007669"/>
    <property type="project" value="UniProtKB-UniRule"/>
</dbReference>
<dbReference type="GO" id="GO:0006103">
    <property type="term" value="P:2-oxoglutarate metabolic process"/>
    <property type="evidence" value="ECO:0007669"/>
    <property type="project" value="TreeGrafter"/>
</dbReference>
<dbReference type="GO" id="GO:0006739">
    <property type="term" value="P:NADP metabolic process"/>
    <property type="evidence" value="ECO:0007669"/>
    <property type="project" value="UniProtKB-UniRule"/>
</dbReference>
<dbReference type="FunFam" id="3.30.390.30:FF:000002">
    <property type="entry name" value="Soluble pyridine nucleotide transhydrogenase"/>
    <property type="match status" value="1"/>
</dbReference>
<dbReference type="FunFam" id="3.50.50.60:FF:000008">
    <property type="entry name" value="Soluble pyridine nucleotide transhydrogenase"/>
    <property type="match status" value="1"/>
</dbReference>
<dbReference type="Gene3D" id="3.30.390.30">
    <property type="match status" value="1"/>
</dbReference>
<dbReference type="Gene3D" id="3.50.50.60">
    <property type="entry name" value="FAD/NAD(P)-binding domain"/>
    <property type="match status" value="2"/>
</dbReference>
<dbReference type="HAMAP" id="MF_00247">
    <property type="entry name" value="SthA"/>
    <property type="match status" value="1"/>
</dbReference>
<dbReference type="InterPro" id="IPR050151">
    <property type="entry name" value="Class-I_Pyr_Nuc-Dis_Oxidored"/>
</dbReference>
<dbReference type="InterPro" id="IPR036188">
    <property type="entry name" value="FAD/NAD-bd_sf"/>
</dbReference>
<dbReference type="InterPro" id="IPR023753">
    <property type="entry name" value="FAD/NAD-binding_dom"/>
</dbReference>
<dbReference type="InterPro" id="IPR016156">
    <property type="entry name" value="FAD/NAD-linked_Rdtase_dimer_sf"/>
</dbReference>
<dbReference type="InterPro" id="IPR001100">
    <property type="entry name" value="Pyr_nuc-diS_OxRdtase"/>
</dbReference>
<dbReference type="InterPro" id="IPR004099">
    <property type="entry name" value="Pyr_nucl-diS_OxRdtase_dimer"/>
</dbReference>
<dbReference type="InterPro" id="IPR022962">
    <property type="entry name" value="STH_gammaproteobact"/>
</dbReference>
<dbReference type="NCBIfam" id="NF003585">
    <property type="entry name" value="PRK05249.1"/>
    <property type="match status" value="1"/>
</dbReference>
<dbReference type="PANTHER" id="PTHR22912">
    <property type="entry name" value="DISULFIDE OXIDOREDUCTASE"/>
    <property type="match status" value="1"/>
</dbReference>
<dbReference type="PANTHER" id="PTHR22912:SF93">
    <property type="entry name" value="SOLUBLE PYRIDINE NUCLEOTIDE TRANSHYDROGENASE"/>
    <property type="match status" value="1"/>
</dbReference>
<dbReference type="Pfam" id="PF07992">
    <property type="entry name" value="Pyr_redox_2"/>
    <property type="match status" value="1"/>
</dbReference>
<dbReference type="Pfam" id="PF02852">
    <property type="entry name" value="Pyr_redox_dim"/>
    <property type="match status" value="1"/>
</dbReference>
<dbReference type="PIRSF" id="PIRSF000350">
    <property type="entry name" value="Mercury_reductase_MerA"/>
    <property type="match status" value="1"/>
</dbReference>
<dbReference type="PRINTS" id="PR00368">
    <property type="entry name" value="FADPNR"/>
</dbReference>
<dbReference type="PRINTS" id="PR00411">
    <property type="entry name" value="PNDRDTASEI"/>
</dbReference>
<dbReference type="SUPFAM" id="SSF51905">
    <property type="entry name" value="FAD/NAD(P)-binding domain"/>
    <property type="match status" value="1"/>
</dbReference>
<dbReference type="SUPFAM" id="SSF55424">
    <property type="entry name" value="FAD/NAD-linked reductases, dimerisation (C-terminal) domain"/>
    <property type="match status" value="1"/>
</dbReference>
<name>STHA_YERPS</name>
<organism>
    <name type="scientific">Yersinia pseudotuberculosis serotype I (strain IP32953)</name>
    <dbReference type="NCBI Taxonomy" id="273123"/>
    <lineage>
        <taxon>Bacteria</taxon>
        <taxon>Pseudomonadati</taxon>
        <taxon>Pseudomonadota</taxon>
        <taxon>Gammaproteobacteria</taxon>
        <taxon>Enterobacterales</taxon>
        <taxon>Yersiniaceae</taxon>
        <taxon>Yersinia</taxon>
    </lineage>
</organism>
<comment type="function">
    <text evidence="1">Conversion of NADPH, generated by peripheral catabolic pathways, to NADH, which can enter the respiratory chain for energy generation.</text>
</comment>
<comment type="catalytic activity">
    <reaction evidence="1">
        <text>NAD(+) + NADPH = NADH + NADP(+)</text>
        <dbReference type="Rhea" id="RHEA:11692"/>
        <dbReference type="ChEBI" id="CHEBI:57540"/>
        <dbReference type="ChEBI" id="CHEBI:57783"/>
        <dbReference type="ChEBI" id="CHEBI:57945"/>
        <dbReference type="ChEBI" id="CHEBI:58349"/>
        <dbReference type="EC" id="1.6.1.1"/>
    </reaction>
</comment>
<comment type="cofactor">
    <cofactor evidence="1">
        <name>FAD</name>
        <dbReference type="ChEBI" id="CHEBI:57692"/>
    </cofactor>
    <text evidence="1">Binds 1 FAD per subunit.</text>
</comment>
<comment type="subcellular location">
    <subcellularLocation>
        <location evidence="1">Cytoplasm</location>
    </subcellularLocation>
</comment>
<comment type="similarity">
    <text evidence="1">Belongs to the class-I pyridine nucleotide-disulfide oxidoreductase family.</text>
</comment>
<gene>
    <name evidence="1" type="primary">sthA</name>
    <name evidence="1" type="synonym">udhA</name>
    <name type="ordered locus">YPTB0121</name>
</gene>
<feature type="chain" id="PRO_0000260248" description="Soluble pyridine nucleotide transhydrogenase">
    <location>
        <begin position="1"/>
        <end position="466"/>
    </location>
</feature>
<feature type="binding site" evidence="1">
    <location>
        <begin position="36"/>
        <end position="45"/>
    </location>
    <ligand>
        <name>FAD</name>
        <dbReference type="ChEBI" id="CHEBI:57692"/>
    </ligand>
</feature>
<evidence type="ECO:0000255" key="1">
    <source>
        <dbReference type="HAMAP-Rule" id="MF_00247"/>
    </source>
</evidence>
<protein>
    <recommendedName>
        <fullName evidence="1">Soluble pyridine nucleotide transhydrogenase</fullName>
        <shortName evidence="1">STH</shortName>
        <ecNumber evidence="1">1.6.1.1</ecNumber>
    </recommendedName>
    <alternativeName>
        <fullName evidence="1">NAD(P)(+) transhydrogenase [B-specific]</fullName>
    </alternativeName>
</protein>
<proteinExistence type="inferred from homology"/>
<keyword id="KW-0963">Cytoplasm</keyword>
<keyword id="KW-0274">FAD</keyword>
<keyword id="KW-0285">Flavoprotein</keyword>
<keyword id="KW-0520">NAD</keyword>
<keyword id="KW-0521">NADP</keyword>
<keyword id="KW-0560">Oxidoreductase</keyword>
<accession>Q66G61</accession>
<sequence>MQQHFHFDAIVIGSGPGGEGAAMGLVKQGARVAVIERYNNVGGGCTHWGTIPSKALRHAVSRIIEFNQNPLYSDNARTIKSSFADILNHADRVINQQTRMRQGFYDRNHCHMFSGDASFIDANTVNVRYADGTSDTLQADNIVIATGSRPYRPVNVDFNHERIYDSDTILQLSHEPQHVIIYGAGVIGCEYASIFRGLSVKVDLINTRDRLLAFLDQEMSDALSYHFWNNGVVIRHNEEFEQIEGTTDGVIVHLKSGKKVKADCLLYANGRTGNTSGLGLENIGLEADSRGLLKVNSMYQTALSHVYAVGDVIGYPSLASAAYDQGRIAAQAMIKGEANVHLIEDIPTGIYTIPEISSVGKTEQELTAMKVPYEVGRAQFKHLARAQIVGMDTGSLKILFHRETKQILGIHCFGERAAEIIHIGQAIMEQKGEGNTLEYFVNTTFNYPTMAEAYRVAALNGLNRLF</sequence>